<sequence>MRECISIHVGQAGVQIGNACWELYCLEHGIQPDGQMPSDKTIGGGDDSFNTFFSETGAGKHVPRAVFVDLEPTVIDEVRTGTYRQLFHPEQLITGKEDAANNYARGHYTIGKEIIDLVLDRIRKLADQCTGLQGFLVFHSFGGGTGSGFTSLLMERLSVDYGKKSKLEFSIYPAPQVSTAVVEPYNSILTTHTTLEHSDCAFMVDNEAIYDICRRNLDIERPTYTNLNRLISQIVSSITASLRFDGALNVDLTEFQTNLVPYPRIHFPLATYAPVISAEKAYHEQLSVAEITNACFEPANQMVKCDPRHGKYMACCLLYRGDVVPKDVNAAIATIKTKRSIQFVDWCPTGFKVGINYQPPTVVPGGDLAKVQRAVCMLSNTTAIAEAWARLDHKFDLMYAKRAFVHWYVGEGMEEGEFSEAREDMAALEKDYEEVGVDSVEGEGEEEGEEY</sequence>
<comment type="function">
    <text evidence="3 4">Heterodimer of alpha- and beta-tubulin (By similarity). A typical microtubule is a hollow water-filled tube with an outer diameter of 25 nm and an inner diameter of 15 nM (By similarity). Alpha-beta heterodimers associate head-to-tail to form protofilaments running lengthwise along the microtubule wall with the beta-tubulin subunit facing the microtubule plus end conferring a structural polarity (By similarity). Microtubules usually have 13 protofilaments but different protofilament numbers can be found in some organisms and specialized cells (By similarity). Interacts with gamma-tubulin; the interaction allows microtubules to nucleate from the gamma-tubulin ring complex (gTuRC) (By similarity). Nascent microtubule interacts (via alpha-tubulin MREC motif) with TTC5/STRAP; this interaction may result in tubulin mRNA-targeted degradation (By similarity). Component of sperm flagellar doublet microtubules (By similarity).</text>
</comment>
<comment type="catalytic activity">
    <reaction evidence="3">
        <text>GTP + H2O = GDP + phosphate + H(+)</text>
        <dbReference type="Rhea" id="RHEA:19669"/>
        <dbReference type="ChEBI" id="CHEBI:15377"/>
        <dbReference type="ChEBI" id="CHEBI:15378"/>
        <dbReference type="ChEBI" id="CHEBI:37565"/>
        <dbReference type="ChEBI" id="CHEBI:43474"/>
        <dbReference type="ChEBI" id="CHEBI:58189"/>
    </reaction>
    <physiologicalReaction direction="left-to-right" evidence="3">
        <dbReference type="Rhea" id="RHEA:19670"/>
    </physiologicalReaction>
</comment>
<comment type="cofactor">
    <cofactor evidence="3">
        <name>Mg(2+)</name>
        <dbReference type="ChEBI" id="CHEBI:18420"/>
    </cofactor>
</comment>
<comment type="subunit">
    <text>Dimer of alpha and beta chains. A typical microtubule is a hollow water-filled tube with an outer diameter of 25 nm and an inner diameter of 15 nM. Alpha-beta heterodimers associate head-to-tail to form protofilaments running lengthwise along the microtubule wall with the beta-tubulin subunit facing the microtubule plus end conferring a structural polarity. Microtubules usually have 13 protofilaments but different protofilament numbers can be found in some organisms and specialized cells.</text>
</comment>
<comment type="subcellular location">
    <subcellularLocation>
        <location>Cytoplasm</location>
        <location>Cytoskeleton</location>
    </subcellularLocation>
</comment>
<comment type="PTM">
    <text evidence="2">Some glutamate residues at the C-terminus are polyglycylated, resulting in polyglycine chains on the gamma-carboxyl group. Glycylation is mainly limited to tubulin incorporated into axonemes (cilia and flagella) whereas glutamylation is prevalent in neuronal cells, centrioles, axonemes, and the mitotic spindle. Both modifications can coexist on the same protein on adjacent residues, and lowering polyglycylation levels increases polyglutamylation, and reciprocally. Cilia and flagella glycylation is required for their stability and maintenance. Flagella glycylation controls sperm motility.</text>
</comment>
<comment type="PTM">
    <text evidence="2 6">Some glutamate residues at the C-terminus are polyglutamylated, resulting in polyglutamate chains on the gamma-carboxyl group (By similarity). Polyglutamylation plays a key role in microtubule severing by spastin (SPAST). SPAST preferentially recognizes and acts on microtubules decorated with short polyglutamate tails: severing activity by SPAST increases as the number of glutamates per tubulin rises from one to eight, but decreases beyond this glutamylation threshold (By similarity). Glutamylation is also involved in cilia motility (By similarity).</text>
</comment>
<comment type="PTM">
    <text evidence="6">Acetylation of alpha chains at Lys-40 is located inside the microtubule lumen. This modification has been correlated with increased microtubule stability, intracellular transport and ciliary assembly.</text>
</comment>
<comment type="PTM">
    <text evidence="3">Methylation of alpha chains at Lys-40 is found in mitotic microtubules and is required for normal mitosis and cytokinesis contributing to genomic stability.</text>
</comment>
<comment type="PTM">
    <text evidence="6">Nitration of Tyr-451 is irreversible and interferes with normal dynein intracellular distribution.</text>
</comment>
<comment type="PTM">
    <text evidence="4 6">Undergoes a tyrosination/detyrosination cycle, the cyclic removal and re-addition of a C-terminal tyrosine residue by the enzymes tubulin tyrosine carboxypeptidase (MATCAP1, VASH1 or VASH2) and tubulin tyrosine ligase (TTL), respectively.</text>
</comment>
<comment type="PTM">
    <molecule>Tubulin alpha-1B chain</molecule>
    <text evidence="4 6">Tyrosination promotes microtubule interaction with CAP-Gly domain-containing proteins such as CLIP1, CLIP2 and DCTN1 (By similarity). Tyrosination regulates the initiation of dynein-dynactin motility via interaction with DCTN1, which brings the dynein-dynactin complex into contact with microtubules. In neurons, tyrosinated tubulins mediate the initiation of retrograde vesicle transport (By similarity).</text>
</comment>
<comment type="PTM">
    <molecule>Detyrosinated tubulin alpha-1B chain</molecule>
    <text evidence="2 3">Detyrosination is involved in metaphase plate congression by guiding chromosomes during mitosis: detyrosination promotes interaction with CENPE, promoting pole-proximal transport of chromosomes toward the equator (By similarity). Detyrosination increases microtubules-dependent mechanotransduction in dystrophic cardiac and skeletal muscle. In cardiomyocytes, detyrosinated microtubules are required to resist to contractile compression during contraction: detyrosination promotes association with desmin (DES) at force-generating sarcomeres, leading to buckled microtubules and mechanical resistance to contraction (By similarity).</text>
</comment>
<comment type="similarity">
    <text evidence="8">Belongs to the tubulin family.</text>
</comment>
<proteinExistence type="evidence at transcript level"/>
<organism>
    <name type="scientific">Meriones unguiculatus</name>
    <name type="common">Mongolian jird</name>
    <name type="synonym">Gerbillus unguiculatus</name>
    <dbReference type="NCBI Taxonomy" id="10047"/>
    <lineage>
        <taxon>Eukaryota</taxon>
        <taxon>Metazoa</taxon>
        <taxon>Chordata</taxon>
        <taxon>Craniata</taxon>
        <taxon>Vertebrata</taxon>
        <taxon>Euteleostomi</taxon>
        <taxon>Mammalia</taxon>
        <taxon>Eutheria</taxon>
        <taxon>Euarchontoglires</taxon>
        <taxon>Glires</taxon>
        <taxon>Rodentia</taxon>
        <taxon>Myomorpha</taxon>
        <taxon>Muroidea</taxon>
        <taxon>Muridae</taxon>
        <taxon>Gerbillinae</taxon>
        <taxon>Meriones</taxon>
    </lineage>
</organism>
<evidence type="ECO:0000250" key="1"/>
<evidence type="ECO:0000250" key="2">
    <source>
        <dbReference type="UniProtKB" id="P05213"/>
    </source>
</evidence>
<evidence type="ECO:0000250" key="3">
    <source>
        <dbReference type="UniProtKB" id="P68363"/>
    </source>
</evidence>
<evidence type="ECO:0000250" key="4">
    <source>
        <dbReference type="UniProtKB" id="P68369"/>
    </source>
</evidence>
<evidence type="ECO:0000250" key="5">
    <source>
        <dbReference type="UniProtKB" id="P68373"/>
    </source>
</evidence>
<evidence type="ECO:0000250" key="6">
    <source>
        <dbReference type="UniProtKB" id="Q71U36"/>
    </source>
</evidence>
<evidence type="ECO:0000256" key="7">
    <source>
        <dbReference type="SAM" id="MobiDB-lite"/>
    </source>
</evidence>
<evidence type="ECO:0000305" key="8"/>
<reference key="1">
    <citation type="submission" date="1998-02" db="EMBL/GenBank/DDBJ databases">
        <title>Gerbil cochlear alpha-tubulin cDNA sequence.</title>
        <authorList>
            <person name="Luque Brown E."/>
            <person name="Pack A.K."/>
            <person name="Slepecky N.B."/>
        </authorList>
    </citation>
    <scope>NUCLEOTIDE SEQUENCE [MRNA]</scope>
    <source>
        <tissue>Cochlear duct</tissue>
    </source>
</reference>
<accession>P68360</accession>
<accession>P04687</accession>
<accession>P05209</accession>
<dbReference type="EC" id="3.6.5.-" evidence="3"/>
<dbReference type="EMBL" id="AF052694">
    <property type="protein sequence ID" value="AAD04294.1"/>
    <property type="molecule type" value="mRNA"/>
</dbReference>
<dbReference type="SMR" id="P68360"/>
<dbReference type="OrthoDB" id="1844at2759"/>
<dbReference type="GO" id="GO:0005737">
    <property type="term" value="C:cytoplasm"/>
    <property type="evidence" value="ECO:0007669"/>
    <property type="project" value="UniProtKB-KW"/>
</dbReference>
<dbReference type="GO" id="GO:0005874">
    <property type="term" value="C:microtubule"/>
    <property type="evidence" value="ECO:0007669"/>
    <property type="project" value="UniProtKB-KW"/>
</dbReference>
<dbReference type="GO" id="GO:0015630">
    <property type="term" value="C:microtubule cytoskeleton"/>
    <property type="evidence" value="ECO:0000250"/>
    <property type="project" value="UniProtKB"/>
</dbReference>
<dbReference type="GO" id="GO:0005525">
    <property type="term" value="F:GTP binding"/>
    <property type="evidence" value="ECO:0000250"/>
    <property type="project" value="UniProtKB"/>
</dbReference>
<dbReference type="GO" id="GO:0003924">
    <property type="term" value="F:GTPase activity"/>
    <property type="evidence" value="ECO:0000250"/>
    <property type="project" value="UniProtKB"/>
</dbReference>
<dbReference type="GO" id="GO:0046872">
    <property type="term" value="F:metal ion binding"/>
    <property type="evidence" value="ECO:0007669"/>
    <property type="project" value="UniProtKB-KW"/>
</dbReference>
<dbReference type="GO" id="GO:0005200">
    <property type="term" value="F:structural constituent of cytoskeleton"/>
    <property type="evidence" value="ECO:0000250"/>
    <property type="project" value="UniProtKB"/>
</dbReference>
<dbReference type="GO" id="GO:0000226">
    <property type="term" value="P:microtubule cytoskeleton organization"/>
    <property type="evidence" value="ECO:0000250"/>
    <property type="project" value="UniProtKB"/>
</dbReference>
<dbReference type="CDD" id="cd02186">
    <property type="entry name" value="alpha_tubulin"/>
    <property type="match status" value="1"/>
</dbReference>
<dbReference type="FunFam" id="1.10.287.600:FF:000005">
    <property type="entry name" value="Tubulin alpha chain"/>
    <property type="match status" value="1"/>
</dbReference>
<dbReference type="FunFam" id="3.30.1330.20:FF:000001">
    <property type="entry name" value="Tubulin alpha chain"/>
    <property type="match status" value="1"/>
</dbReference>
<dbReference type="FunFam" id="3.40.50.1440:FF:000002">
    <property type="entry name" value="Tubulin alpha chain"/>
    <property type="match status" value="1"/>
</dbReference>
<dbReference type="Gene3D" id="1.10.287.600">
    <property type="entry name" value="Helix hairpin bin"/>
    <property type="match status" value="1"/>
</dbReference>
<dbReference type="Gene3D" id="3.30.1330.20">
    <property type="entry name" value="Tubulin/FtsZ, C-terminal domain"/>
    <property type="match status" value="1"/>
</dbReference>
<dbReference type="Gene3D" id="3.40.50.1440">
    <property type="entry name" value="Tubulin/FtsZ, GTPase domain"/>
    <property type="match status" value="1"/>
</dbReference>
<dbReference type="InterPro" id="IPR002452">
    <property type="entry name" value="Alpha_tubulin"/>
</dbReference>
<dbReference type="InterPro" id="IPR008280">
    <property type="entry name" value="Tub_FtsZ_C"/>
</dbReference>
<dbReference type="InterPro" id="IPR000217">
    <property type="entry name" value="Tubulin"/>
</dbReference>
<dbReference type="InterPro" id="IPR037103">
    <property type="entry name" value="Tubulin/FtsZ-like_C"/>
</dbReference>
<dbReference type="InterPro" id="IPR018316">
    <property type="entry name" value="Tubulin/FtsZ_2-layer-sand-dom"/>
</dbReference>
<dbReference type="InterPro" id="IPR036525">
    <property type="entry name" value="Tubulin/FtsZ_GTPase_sf"/>
</dbReference>
<dbReference type="InterPro" id="IPR023123">
    <property type="entry name" value="Tubulin_C"/>
</dbReference>
<dbReference type="InterPro" id="IPR017975">
    <property type="entry name" value="Tubulin_CS"/>
</dbReference>
<dbReference type="InterPro" id="IPR003008">
    <property type="entry name" value="Tubulin_FtsZ_GTPase"/>
</dbReference>
<dbReference type="PANTHER" id="PTHR11588">
    <property type="entry name" value="TUBULIN"/>
    <property type="match status" value="1"/>
</dbReference>
<dbReference type="Pfam" id="PF00091">
    <property type="entry name" value="Tubulin"/>
    <property type="match status" value="1"/>
</dbReference>
<dbReference type="Pfam" id="PF03953">
    <property type="entry name" value="Tubulin_C"/>
    <property type="match status" value="1"/>
</dbReference>
<dbReference type="PRINTS" id="PR01162">
    <property type="entry name" value="ALPHATUBULIN"/>
</dbReference>
<dbReference type="PRINTS" id="PR01161">
    <property type="entry name" value="TUBULIN"/>
</dbReference>
<dbReference type="SMART" id="SM00864">
    <property type="entry name" value="Tubulin"/>
    <property type="match status" value="1"/>
</dbReference>
<dbReference type="SMART" id="SM00865">
    <property type="entry name" value="Tubulin_C"/>
    <property type="match status" value="1"/>
</dbReference>
<dbReference type="SUPFAM" id="SSF55307">
    <property type="entry name" value="Tubulin C-terminal domain-like"/>
    <property type="match status" value="1"/>
</dbReference>
<dbReference type="SUPFAM" id="SSF52490">
    <property type="entry name" value="Tubulin nucleotide-binding domain-like"/>
    <property type="match status" value="1"/>
</dbReference>
<dbReference type="PROSITE" id="PS00227">
    <property type="entry name" value="TUBULIN"/>
    <property type="match status" value="1"/>
</dbReference>
<name>TBA1B_MERUN</name>
<protein>
    <recommendedName>
        <fullName>Tubulin alpha-1B chain</fullName>
        <ecNumber evidence="3">3.6.5.-</ecNumber>
    </recommendedName>
    <alternativeName>
        <fullName>Alpha-tubulin 1</fullName>
    </alternativeName>
    <alternativeName>
        <fullName>Alpha-tubulin I</fullName>
    </alternativeName>
    <alternativeName>
        <fullName>Tubulin alpha-1 chain</fullName>
    </alternativeName>
    <component>
        <recommendedName>
            <fullName>Detyrosinated tubulin alpha-1B chain</fullName>
        </recommendedName>
    </component>
</protein>
<keyword id="KW-0007">Acetylation</keyword>
<keyword id="KW-0963">Cytoplasm</keyword>
<keyword id="KW-0206">Cytoskeleton</keyword>
<keyword id="KW-0342">GTP-binding</keyword>
<keyword id="KW-0378">Hydrolase</keyword>
<keyword id="KW-1017">Isopeptide bond</keyword>
<keyword id="KW-0460">Magnesium</keyword>
<keyword id="KW-0479">Metal-binding</keyword>
<keyword id="KW-0488">Methylation</keyword>
<keyword id="KW-0493">Microtubule</keyword>
<keyword id="KW-0944">Nitration</keyword>
<keyword id="KW-0547">Nucleotide-binding</keyword>
<keyword id="KW-0597">Phosphoprotein</keyword>
<keyword id="KW-0832">Ubl conjugation</keyword>
<feature type="chain" id="PRO_0000048119" description="Tubulin alpha-1B chain">
    <location>
        <begin position="1"/>
        <end position="451"/>
    </location>
</feature>
<feature type="chain" id="PRO_0000437386" description="Detyrosinated tubulin alpha-1B chain" evidence="3">
    <location>
        <begin position="1"/>
        <end position="450"/>
    </location>
</feature>
<feature type="region of interest" description="Disordered" evidence="7">
    <location>
        <begin position="432"/>
        <end position="451"/>
    </location>
</feature>
<feature type="active site" evidence="3">
    <location>
        <position position="254"/>
    </location>
</feature>
<feature type="binding site" evidence="3">
    <location>
        <position position="10"/>
    </location>
    <ligand>
        <name>GTP</name>
        <dbReference type="ChEBI" id="CHEBI:37565"/>
    </ligand>
</feature>
<feature type="binding site" evidence="3">
    <location>
        <position position="11"/>
    </location>
    <ligand>
        <name>GTP</name>
        <dbReference type="ChEBI" id="CHEBI:37565"/>
    </ligand>
</feature>
<feature type="binding site" evidence="3">
    <location>
        <position position="12"/>
    </location>
    <ligand>
        <name>GTP</name>
        <dbReference type="ChEBI" id="CHEBI:37565"/>
    </ligand>
</feature>
<feature type="binding site" evidence="3">
    <location>
        <position position="15"/>
    </location>
    <ligand>
        <name>GTP</name>
        <dbReference type="ChEBI" id="CHEBI:37565"/>
    </ligand>
</feature>
<feature type="binding site" evidence="3">
    <location>
        <position position="71"/>
    </location>
    <ligand>
        <name>GTP</name>
        <dbReference type="ChEBI" id="CHEBI:37565"/>
    </ligand>
</feature>
<feature type="binding site" evidence="3">
    <location>
        <position position="71"/>
    </location>
    <ligand>
        <name>Mg(2+)</name>
        <dbReference type="ChEBI" id="CHEBI:18420"/>
    </ligand>
</feature>
<feature type="binding site" evidence="3">
    <location>
        <position position="99"/>
    </location>
    <ligand>
        <name>GTP</name>
        <dbReference type="ChEBI" id="CHEBI:37565"/>
    </ligand>
</feature>
<feature type="binding site" evidence="3">
    <location>
        <position position="140"/>
    </location>
    <ligand>
        <name>GTP</name>
        <dbReference type="ChEBI" id="CHEBI:37565"/>
    </ligand>
</feature>
<feature type="binding site" evidence="3">
    <location>
        <position position="143"/>
    </location>
    <ligand>
        <name>GTP</name>
        <dbReference type="ChEBI" id="CHEBI:37565"/>
    </ligand>
</feature>
<feature type="binding site" evidence="3">
    <location>
        <position position="144"/>
    </location>
    <ligand>
        <name>GTP</name>
        <dbReference type="ChEBI" id="CHEBI:37565"/>
    </ligand>
</feature>
<feature type="binding site" evidence="3">
    <location>
        <position position="145"/>
    </location>
    <ligand>
        <name>GTP</name>
        <dbReference type="ChEBI" id="CHEBI:37565"/>
    </ligand>
</feature>
<feature type="binding site" evidence="3">
    <location>
        <position position="146"/>
    </location>
    <ligand>
        <name>GTP</name>
        <dbReference type="ChEBI" id="CHEBI:37565"/>
    </ligand>
</feature>
<feature type="binding site" evidence="3">
    <location>
        <position position="179"/>
    </location>
    <ligand>
        <name>GTP</name>
        <dbReference type="ChEBI" id="CHEBI:37565"/>
    </ligand>
</feature>
<feature type="binding site" evidence="3">
    <location>
        <position position="183"/>
    </location>
    <ligand>
        <name>GTP</name>
        <dbReference type="ChEBI" id="CHEBI:37565"/>
    </ligand>
</feature>
<feature type="binding site" evidence="3">
    <location>
        <position position="206"/>
    </location>
    <ligand>
        <name>GTP</name>
        <dbReference type="ChEBI" id="CHEBI:37565"/>
    </ligand>
</feature>
<feature type="binding site" evidence="3">
    <location>
        <position position="224"/>
    </location>
    <ligand>
        <name>GTP</name>
        <dbReference type="ChEBI" id="CHEBI:37565"/>
    </ligand>
</feature>
<feature type="binding site" evidence="3">
    <location>
        <position position="228"/>
    </location>
    <ligand>
        <name>GTP</name>
        <dbReference type="ChEBI" id="CHEBI:37565"/>
    </ligand>
</feature>
<feature type="binding site" evidence="3">
    <location>
        <position position="252"/>
    </location>
    <ligand>
        <name>GTP</name>
        <dbReference type="ChEBI" id="CHEBI:37565"/>
    </ligand>
</feature>
<feature type="site" description="Involved in polymerization" evidence="1">
    <location>
        <position position="451"/>
    </location>
</feature>
<feature type="modified residue" description="N6,N6,N6-trimethyllysine; alternate" evidence="3">
    <location>
        <position position="40"/>
    </location>
</feature>
<feature type="modified residue" description="N6-acetyllysine; alternate" evidence="3">
    <location>
        <position position="40"/>
    </location>
</feature>
<feature type="modified residue" description="Phosphoserine" evidence="3">
    <location>
        <position position="48"/>
    </location>
</feature>
<feature type="modified residue" description="Phosphoserine" evidence="3">
    <location>
        <position position="232"/>
    </location>
</feature>
<feature type="modified residue" description="3'-nitrotyrosine" evidence="5">
    <location>
        <position position="282"/>
    </location>
</feature>
<feature type="modified residue" description="Omega-N-methylarginine" evidence="3">
    <location>
        <position position="339"/>
    </location>
</feature>
<feature type="modified residue" description="Phosphoserine" evidence="5">
    <location>
        <position position="439"/>
    </location>
</feature>
<feature type="modified residue" description="5-glutamyl polyglutamate" evidence="3">
    <location>
        <position position="443"/>
    </location>
</feature>
<feature type="modified residue" description="5-glutamyl polyglutamate" evidence="4">
    <location>
        <position position="445"/>
    </location>
</feature>
<feature type="modified residue" description="3'-nitrotyrosine" evidence="6">
    <location>
        <position position="451"/>
    </location>
</feature>
<feature type="cross-link" description="Glycyl lysine isopeptide (Lys-Gly) (interchain with G-Cter in ubiquitin)" evidence="3">
    <location>
        <position position="326"/>
    </location>
</feature>
<feature type="cross-link" description="Glycyl lysine isopeptide (Lys-Gly) (interchain with G-Cter in ubiquitin)" evidence="3">
    <location>
        <position position="370"/>
    </location>
</feature>
<gene>
    <name type="primary">TUBA1B</name>
    <name type="synonym">TUBA1</name>
</gene>